<evidence type="ECO:0000250" key="1"/>
<evidence type="ECO:0000255" key="2">
    <source>
        <dbReference type="PROSITE-ProRule" id="PRU00147"/>
    </source>
</evidence>
<evidence type="ECO:0000305" key="3"/>
<gene>
    <name type="primary">snx3</name>
    <name type="ORF">AO090020000309</name>
</gene>
<dbReference type="EMBL" id="BA000054">
    <property type="protein sequence ID" value="BAE63513.1"/>
    <property type="molecule type" value="Genomic_DNA"/>
</dbReference>
<dbReference type="RefSeq" id="XP_001824646.1">
    <property type="nucleotide sequence ID" value="XM_001824594.2"/>
</dbReference>
<dbReference type="SMR" id="Q2U4K2"/>
<dbReference type="STRING" id="510516.Q2U4K2"/>
<dbReference type="EnsemblFungi" id="BAE63513">
    <property type="protein sequence ID" value="BAE63513"/>
    <property type="gene ID" value="AO090020000309"/>
</dbReference>
<dbReference type="GeneID" id="5996732"/>
<dbReference type="KEGG" id="aor:AO090020000309"/>
<dbReference type="VEuPathDB" id="FungiDB:AO090020000309"/>
<dbReference type="HOGENOM" id="CLU_057172_2_1_1"/>
<dbReference type="OMA" id="NMYTDYE"/>
<dbReference type="OrthoDB" id="70682at5052"/>
<dbReference type="Proteomes" id="UP000006564">
    <property type="component" value="Chromosome 6"/>
</dbReference>
<dbReference type="GO" id="GO:0031901">
    <property type="term" value="C:early endosome membrane"/>
    <property type="evidence" value="ECO:0007669"/>
    <property type="project" value="TreeGrafter"/>
</dbReference>
<dbReference type="GO" id="GO:0000139">
    <property type="term" value="C:Golgi membrane"/>
    <property type="evidence" value="ECO:0007669"/>
    <property type="project" value="UniProtKB-SubCell"/>
</dbReference>
<dbReference type="GO" id="GO:0030904">
    <property type="term" value="C:retromer complex"/>
    <property type="evidence" value="ECO:0007669"/>
    <property type="project" value="TreeGrafter"/>
</dbReference>
<dbReference type="GO" id="GO:0032266">
    <property type="term" value="F:phosphatidylinositol-3-phosphate binding"/>
    <property type="evidence" value="ECO:0007669"/>
    <property type="project" value="InterPro"/>
</dbReference>
<dbReference type="GO" id="GO:0032456">
    <property type="term" value="P:endocytic recycling"/>
    <property type="evidence" value="ECO:0007669"/>
    <property type="project" value="TreeGrafter"/>
</dbReference>
<dbReference type="GO" id="GO:0034499">
    <property type="term" value="P:late endosome to Golgi transport"/>
    <property type="evidence" value="ECO:0007669"/>
    <property type="project" value="TreeGrafter"/>
</dbReference>
<dbReference type="GO" id="GO:0015031">
    <property type="term" value="P:protein transport"/>
    <property type="evidence" value="ECO:0007669"/>
    <property type="project" value="UniProtKB-KW"/>
</dbReference>
<dbReference type="CDD" id="cd07295">
    <property type="entry name" value="PX_Grd19"/>
    <property type="match status" value="1"/>
</dbReference>
<dbReference type="FunFam" id="3.30.1520.10:FF:000030">
    <property type="entry name" value="Sorting nexin-3, variant"/>
    <property type="match status" value="1"/>
</dbReference>
<dbReference type="Gene3D" id="3.30.1520.10">
    <property type="entry name" value="Phox-like domain"/>
    <property type="match status" value="1"/>
</dbReference>
<dbReference type="InterPro" id="IPR001683">
    <property type="entry name" value="PX_dom"/>
</dbReference>
<dbReference type="InterPro" id="IPR036871">
    <property type="entry name" value="PX_dom_sf"/>
</dbReference>
<dbReference type="InterPro" id="IPR042138">
    <property type="entry name" value="PX_Grd19_PX"/>
</dbReference>
<dbReference type="InterPro" id="IPR051074">
    <property type="entry name" value="Sorting_Nexin"/>
</dbReference>
<dbReference type="PANTHER" id="PTHR45963">
    <property type="entry name" value="RE52028P"/>
    <property type="match status" value="1"/>
</dbReference>
<dbReference type="PANTHER" id="PTHR45963:SF2">
    <property type="entry name" value="RE52028P"/>
    <property type="match status" value="1"/>
</dbReference>
<dbReference type="Pfam" id="PF00787">
    <property type="entry name" value="PX"/>
    <property type="match status" value="1"/>
</dbReference>
<dbReference type="SMART" id="SM00312">
    <property type="entry name" value="PX"/>
    <property type="match status" value="1"/>
</dbReference>
<dbReference type="SUPFAM" id="SSF64268">
    <property type="entry name" value="PX domain"/>
    <property type="match status" value="1"/>
</dbReference>
<dbReference type="PROSITE" id="PS50195">
    <property type="entry name" value="PX"/>
    <property type="match status" value="1"/>
</dbReference>
<name>SNX3_ASPOR</name>
<protein>
    <recommendedName>
        <fullName>Sorting nexin-3</fullName>
    </recommendedName>
</protein>
<accession>Q2U4K2</accession>
<reference key="1">
    <citation type="journal article" date="2005" name="Nature">
        <title>Genome sequencing and analysis of Aspergillus oryzae.</title>
        <authorList>
            <person name="Machida M."/>
            <person name="Asai K."/>
            <person name="Sano M."/>
            <person name="Tanaka T."/>
            <person name="Kumagai T."/>
            <person name="Terai G."/>
            <person name="Kusumoto K."/>
            <person name="Arima T."/>
            <person name="Akita O."/>
            <person name="Kashiwagi Y."/>
            <person name="Abe K."/>
            <person name="Gomi K."/>
            <person name="Horiuchi H."/>
            <person name="Kitamoto K."/>
            <person name="Kobayashi T."/>
            <person name="Takeuchi M."/>
            <person name="Denning D.W."/>
            <person name="Galagan J.E."/>
            <person name="Nierman W.C."/>
            <person name="Yu J."/>
            <person name="Archer D.B."/>
            <person name="Bennett J.W."/>
            <person name="Bhatnagar D."/>
            <person name="Cleveland T.E."/>
            <person name="Fedorova N.D."/>
            <person name="Gotoh O."/>
            <person name="Horikawa H."/>
            <person name="Hosoyama A."/>
            <person name="Ichinomiya M."/>
            <person name="Igarashi R."/>
            <person name="Iwashita K."/>
            <person name="Juvvadi P.R."/>
            <person name="Kato M."/>
            <person name="Kato Y."/>
            <person name="Kin T."/>
            <person name="Kokubun A."/>
            <person name="Maeda H."/>
            <person name="Maeyama N."/>
            <person name="Maruyama J."/>
            <person name="Nagasaki H."/>
            <person name="Nakajima T."/>
            <person name="Oda K."/>
            <person name="Okada K."/>
            <person name="Paulsen I."/>
            <person name="Sakamoto K."/>
            <person name="Sawano T."/>
            <person name="Takahashi M."/>
            <person name="Takase K."/>
            <person name="Terabayashi Y."/>
            <person name="Wortman J.R."/>
            <person name="Yamada O."/>
            <person name="Yamagata Y."/>
            <person name="Anazawa H."/>
            <person name="Hata Y."/>
            <person name="Koide Y."/>
            <person name="Komori T."/>
            <person name="Koyama Y."/>
            <person name="Minetoki T."/>
            <person name="Suharnan S."/>
            <person name="Tanaka A."/>
            <person name="Isono K."/>
            <person name="Kuhara S."/>
            <person name="Ogasawara N."/>
            <person name="Kikuchi H."/>
        </authorList>
    </citation>
    <scope>NUCLEOTIDE SEQUENCE [LARGE SCALE GENOMIC DNA]</scope>
    <source>
        <strain>ATCC 42149 / RIB 40</strain>
    </source>
</reference>
<proteinExistence type="inferred from homology"/>
<sequence length="142" mass="16755">MQAVPESRQQTFEEIYGPPENFLEIEVRNPQTHGTSRNMYTSYEIVCRTNIPAFKLKHSVVRRRYSDFEYFRDILERESTRVTIPPLPGKVFTNRFSDDVIEHRREGLQRFLQIVAGHPLLQTGSKVLASFIQDPNWDRNAW</sequence>
<keyword id="KW-0963">Cytoplasm</keyword>
<keyword id="KW-0333">Golgi apparatus</keyword>
<keyword id="KW-0446">Lipid-binding</keyword>
<keyword id="KW-0472">Membrane</keyword>
<keyword id="KW-0653">Protein transport</keyword>
<keyword id="KW-1185">Reference proteome</keyword>
<keyword id="KW-0813">Transport</keyword>
<feature type="chain" id="PRO_0000238583" description="Sorting nexin-3">
    <location>
        <begin position="1"/>
        <end position="142"/>
    </location>
</feature>
<feature type="domain" description="PX" evidence="2">
    <location>
        <begin position="21"/>
        <end position="138"/>
    </location>
</feature>
<feature type="binding site" evidence="1">
    <location>
        <position position="64"/>
    </location>
    <ligand>
        <name>a 1,2-diacyl-sn-glycero-3-phospho-(1D-myo-inositol-3-phosphate)</name>
        <dbReference type="ChEBI" id="CHEBI:58088"/>
    </ligand>
</feature>
<feature type="binding site" evidence="1">
    <location>
        <position position="66"/>
    </location>
    <ligand>
        <name>a 1,2-diacyl-sn-glycero-3-phospho-(1D-myo-inositol-3-phosphate)</name>
        <dbReference type="ChEBI" id="CHEBI:58088"/>
    </ligand>
</feature>
<feature type="binding site" evidence="1">
    <location>
        <position position="90"/>
    </location>
    <ligand>
        <name>a 1,2-diacyl-sn-glycero-3-phospho-(1D-myo-inositol-3-phosphate)</name>
        <dbReference type="ChEBI" id="CHEBI:58088"/>
    </ligand>
</feature>
<feature type="binding site" evidence="1">
    <location>
        <position position="95"/>
    </location>
    <ligand>
        <name>a 1,2-diacyl-sn-glycero-3-phospho-(1D-myo-inositol-3-phosphate)</name>
        <dbReference type="ChEBI" id="CHEBI:58088"/>
    </ligand>
</feature>
<feature type="binding site" evidence="1">
    <location>
        <position position="104"/>
    </location>
    <ligand>
        <name>a 1,2-diacyl-sn-glycero-3-phospho-(1D-myo-inositol-3-phosphate)</name>
        <dbReference type="ChEBI" id="CHEBI:58088"/>
    </ligand>
</feature>
<comment type="function">
    <text evidence="1">Required for retention of late Golgi membrane proteins. Component of the retrieval machinery that functions by direct interaction with the cytosolic tails of certain TGN membrane proteins during the sorting/budding process at the prevacuolar compartment. Binds phosphatidylinositol 3-phosphate (PtdIns(P3)) (By similarity).</text>
</comment>
<comment type="subcellular location">
    <subcellularLocation>
        <location evidence="1">Cytoplasm</location>
    </subcellularLocation>
    <subcellularLocation>
        <location evidence="3">Golgi apparatus membrane</location>
        <topology evidence="3">Peripheral membrane protein</topology>
        <orientation evidence="3">Cytoplasmic side</orientation>
    </subcellularLocation>
    <subcellularLocation>
        <location evidence="3">Prevacuolar compartment membrane</location>
        <topology evidence="3">Peripheral membrane protein</topology>
        <orientation evidence="3">Cytoplasmic side</orientation>
    </subcellularLocation>
</comment>
<comment type="domain">
    <text evidence="1">The PX domain binds phosphatidylinositol 3-phosphate which is necessary for peripheral membrane localization.</text>
</comment>
<comment type="similarity">
    <text evidence="3">Belongs to the sorting nexin family.</text>
</comment>
<organism>
    <name type="scientific">Aspergillus oryzae (strain ATCC 42149 / RIB 40)</name>
    <name type="common">Yellow koji mold</name>
    <dbReference type="NCBI Taxonomy" id="510516"/>
    <lineage>
        <taxon>Eukaryota</taxon>
        <taxon>Fungi</taxon>
        <taxon>Dikarya</taxon>
        <taxon>Ascomycota</taxon>
        <taxon>Pezizomycotina</taxon>
        <taxon>Eurotiomycetes</taxon>
        <taxon>Eurotiomycetidae</taxon>
        <taxon>Eurotiales</taxon>
        <taxon>Aspergillaceae</taxon>
        <taxon>Aspergillus</taxon>
        <taxon>Aspergillus subgen. Circumdati</taxon>
    </lineage>
</organism>